<reference key="1">
    <citation type="journal article" date="2009" name="Infect. Immun.">
        <title>Comparative genomics reveal extensive transposon-mediated genomic plasticity and diversity among potential effector proteins within the genus Coxiella.</title>
        <authorList>
            <person name="Beare P.A."/>
            <person name="Unsworth N."/>
            <person name="Andoh M."/>
            <person name="Voth D.E."/>
            <person name="Omsland A."/>
            <person name="Gilk S.D."/>
            <person name="Williams K.P."/>
            <person name="Sobral B.W."/>
            <person name="Kupko J.J. III"/>
            <person name="Porcella S.F."/>
            <person name="Samuel J.E."/>
            <person name="Heinzen R.A."/>
        </authorList>
    </citation>
    <scope>NUCLEOTIDE SEQUENCE [LARGE SCALE GENOMIC DNA]</scope>
    <source>
        <strain>CbuK_Q154</strain>
    </source>
</reference>
<proteinExistence type="inferred from homology"/>
<sequence length="199" mass="21485">MNLFQRVKYNFEESIKTKTAAIELLVDPIVQAGELMAQCLLNEHKILSCGNGGSAADAQHFSSEMLNRFETERPSFPALALTTDASTVTAIANDYSYAEVFSKQIAGLGSTGDILLAISTSGHSKNILQAITAAHIRGMNVVALTGRDGGELFTLLGTDDIEIRVPAESTARIQETHALIIHCLCDIIDRKLIPSSEDH</sequence>
<accession>B6J4R0</accession>
<evidence type="ECO:0000255" key="1">
    <source>
        <dbReference type="HAMAP-Rule" id="MF_00067"/>
    </source>
</evidence>
<gene>
    <name evidence="1" type="primary">gmhA</name>
    <name type="ordered locus">CbuK_0264</name>
</gene>
<protein>
    <recommendedName>
        <fullName evidence="1">Phosphoheptose isomerase</fullName>
        <ecNumber evidence="1">5.3.1.28</ecNumber>
    </recommendedName>
    <alternativeName>
        <fullName evidence="1">Sedoheptulose 7-phosphate isomerase</fullName>
    </alternativeName>
</protein>
<organism>
    <name type="scientific">Coxiella burnetii (strain CbuK_Q154)</name>
    <name type="common">Coxiella burnetii (strain Q154)</name>
    <dbReference type="NCBI Taxonomy" id="434924"/>
    <lineage>
        <taxon>Bacteria</taxon>
        <taxon>Pseudomonadati</taxon>
        <taxon>Pseudomonadota</taxon>
        <taxon>Gammaproteobacteria</taxon>
        <taxon>Legionellales</taxon>
        <taxon>Coxiellaceae</taxon>
        <taxon>Coxiella</taxon>
    </lineage>
</organism>
<name>GMHA_COXB1</name>
<keyword id="KW-0119">Carbohydrate metabolism</keyword>
<keyword id="KW-0963">Cytoplasm</keyword>
<keyword id="KW-0413">Isomerase</keyword>
<keyword id="KW-0479">Metal-binding</keyword>
<keyword id="KW-0862">Zinc</keyword>
<comment type="function">
    <text evidence="1">Catalyzes the isomerization of sedoheptulose 7-phosphate in D-glycero-D-manno-heptose 7-phosphate.</text>
</comment>
<comment type="catalytic activity">
    <reaction evidence="1">
        <text>2 D-sedoheptulose 7-phosphate = D-glycero-alpha-D-manno-heptose 7-phosphate + D-glycero-beta-D-manno-heptose 7-phosphate</text>
        <dbReference type="Rhea" id="RHEA:27489"/>
        <dbReference type="ChEBI" id="CHEBI:57483"/>
        <dbReference type="ChEBI" id="CHEBI:60203"/>
        <dbReference type="ChEBI" id="CHEBI:60204"/>
        <dbReference type="EC" id="5.3.1.28"/>
    </reaction>
</comment>
<comment type="cofactor">
    <cofactor evidence="1">
        <name>Zn(2+)</name>
        <dbReference type="ChEBI" id="CHEBI:29105"/>
    </cofactor>
    <text evidence="1">Binds 1 zinc ion per subunit.</text>
</comment>
<comment type="pathway">
    <text evidence="1">Carbohydrate biosynthesis; D-glycero-D-manno-heptose 7-phosphate biosynthesis; D-glycero-alpha-D-manno-heptose 7-phosphate and D-glycero-beta-D-manno-heptose 7-phosphate from sedoheptulose 7-phosphate: step 1/1.</text>
</comment>
<comment type="subunit">
    <text evidence="1">Homotetramer.</text>
</comment>
<comment type="subcellular location">
    <subcellularLocation>
        <location evidence="1">Cytoplasm</location>
    </subcellularLocation>
</comment>
<comment type="miscellaneous">
    <text evidence="1">The reaction produces a racemic mixture of D-glycero-alpha-D-manno-heptose 7-phosphate and D-glycero-beta-D-manno-heptose 7-phosphate.</text>
</comment>
<comment type="similarity">
    <text evidence="1">Belongs to the SIS family. GmhA subfamily.</text>
</comment>
<feature type="chain" id="PRO_1000092267" description="Phosphoheptose isomerase">
    <location>
        <begin position="1"/>
        <end position="199"/>
    </location>
</feature>
<feature type="domain" description="SIS" evidence="1">
    <location>
        <begin position="36"/>
        <end position="198"/>
    </location>
</feature>
<feature type="binding site" evidence="1">
    <location>
        <begin position="51"/>
        <end position="53"/>
    </location>
    <ligand>
        <name>substrate</name>
    </ligand>
</feature>
<feature type="binding site" evidence="1">
    <location>
        <position position="60"/>
    </location>
    <ligand>
        <name>Zn(2+)</name>
        <dbReference type="ChEBI" id="CHEBI:29105"/>
    </ligand>
</feature>
<feature type="binding site" evidence="1">
    <location>
        <position position="64"/>
    </location>
    <ligand>
        <name>substrate</name>
    </ligand>
</feature>
<feature type="binding site" evidence="1">
    <location>
        <position position="64"/>
    </location>
    <ligand>
        <name>Zn(2+)</name>
        <dbReference type="ChEBI" id="CHEBI:29105"/>
    </ligand>
</feature>
<feature type="binding site" evidence="1">
    <location>
        <begin position="93"/>
        <end position="94"/>
    </location>
    <ligand>
        <name>substrate</name>
    </ligand>
</feature>
<feature type="binding site" evidence="1">
    <location>
        <begin position="119"/>
        <end position="121"/>
    </location>
    <ligand>
        <name>substrate</name>
    </ligand>
</feature>
<feature type="binding site" evidence="1">
    <location>
        <position position="124"/>
    </location>
    <ligand>
        <name>substrate</name>
    </ligand>
</feature>
<feature type="binding site" evidence="1">
    <location>
        <position position="174"/>
    </location>
    <ligand>
        <name>substrate</name>
    </ligand>
</feature>
<feature type="binding site" evidence="1">
    <location>
        <position position="174"/>
    </location>
    <ligand>
        <name>Zn(2+)</name>
        <dbReference type="ChEBI" id="CHEBI:29105"/>
    </ligand>
</feature>
<feature type="binding site" evidence="1">
    <location>
        <position position="182"/>
    </location>
    <ligand>
        <name>Zn(2+)</name>
        <dbReference type="ChEBI" id="CHEBI:29105"/>
    </ligand>
</feature>
<dbReference type="EC" id="5.3.1.28" evidence="1"/>
<dbReference type="EMBL" id="CP001020">
    <property type="protein sequence ID" value="ACJ19575.1"/>
    <property type="molecule type" value="Genomic_DNA"/>
</dbReference>
<dbReference type="RefSeq" id="WP_005770434.1">
    <property type="nucleotide sequence ID" value="NC_011528.1"/>
</dbReference>
<dbReference type="SMR" id="B6J4R0"/>
<dbReference type="KEGG" id="cbc:CbuK_0264"/>
<dbReference type="HOGENOM" id="CLU_080999_3_1_6"/>
<dbReference type="UniPathway" id="UPA00041">
    <property type="reaction ID" value="UER00436"/>
</dbReference>
<dbReference type="GO" id="GO:0005737">
    <property type="term" value="C:cytoplasm"/>
    <property type="evidence" value="ECO:0007669"/>
    <property type="project" value="UniProtKB-SubCell"/>
</dbReference>
<dbReference type="GO" id="GO:0097367">
    <property type="term" value="F:carbohydrate derivative binding"/>
    <property type="evidence" value="ECO:0007669"/>
    <property type="project" value="InterPro"/>
</dbReference>
<dbReference type="GO" id="GO:0008968">
    <property type="term" value="F:D-sedoheptulose 7-phosphate isomerase activity"/>
    <property type="evidence" value="ECO:0007669"/>
    <property type="project" value="UniProtKB-UniRule"/>
</dbReference>
<dbReference type="GO" id="GO:0008270">
    <property type="term" value="F:zinc ion binding"/>
    <property type="evidence" value="ECO:0007669"/>
    <property type="project" value="UniProtKB-UniRule"/>
</dbReference>
<dbReference type="GO" id="GO:0005975">
    <property type="term" value="P:carbohydrate metabolic process"/>
    <property type="evidence" value="ECO:0007669"/>
    <property type="project" value="UniProtKB-UniRule"/>
</dbReference>
<dbReference type="GO" id="GO:2001061">
    <property type="term" value="P:D-glycero-D-manno-heptose 7-phosphate biosynthetic process"/>
    <property type="evidence" value="ECO:0007669"/>
    <property type="project" value="UniProtKB-UniPathway"/>
</dbReference>
<dbReference type="CDD" id="cd05006">
    <property type="entry name" value="SIS_GmhA"/>
    <property type="match status" value="1"/>
</dbReference>
<dbReference type="Gene3D" id="3.40.50.10490">
    <property type="entry name" value="Glucose-6-phosphate isomerase like protein, domain 1"/>
    <property type="match status" value="1"/>
</dbReference>
<dbReference type="HAMAP" id="MF_00067">
    <property type="entry name" value="GmhA"/>
    <property type="match status" value="1"/>
</dbReference>
<dbReference type="InterPro" id="IPR035461">
    <property type="entry name" value="GmhA/DiaA"/>
</dbReference>
<dbReference type="InterPro" id="IPR004515">
    <property type="entry name" value="Phosphoheptose_Isoase"/>
</dbReference>
<dbReference type="InterPro" id="IPR001347">
    <property type="entry name" value="SIS_dom"/>
</dbReference>
<dbReference type="InterPro" id="IPR046348">
    <property type="entry name" value="SIS_dom_sf"/>
</dbReference>
<dbReference type="InterPro" id="IPR050099">
    <property type="entry name" value="SIS_GmhA/DiaA_subfam"/>
</dbReference>
<dbReference type="NCBIfam" id="NF010546">
    <property type="entry name" value="PRK13936.1"/>
    <property type="match status" value="1"/>
</dbReference>
<dbReference type="PANTHER" id="PTHR30390:SF6">
    <property type="entry name" value="DNAA INITIATOR-ASSOCIATING PROTEIN DIAA"/>
    <property type="match status" value="1"/>
</dbReference>
<dbReference type="PANTHER" id="PTHR30390">
    <property type="entry name" value="SEDOHEPTULOSE 7-PHOSPHATE ISOMERASE / DNAA INITIATOR-ASSOCIATING FACTOR FOR REPLICATION INITIATION"/>
    <property type="match status" value="1"/>
</dbReference>
<dbReference type="Pfam" id="PF13580">
    <property type="entry name" value="SIS_2"/>
    <property type="match status" value="1"/>
</dbReference>
<dbReference type="SUPFAM" id="SSF53697">
    <property type="entry name" value="SIS domain"/>
    <property type="match status" value="1"/>
</dbReference>
<dbReference type="PROSITE" id="PS51464">
    <property type="entry name" value="SIS"/>
    <property type="match status" value="1"/>
</dbReference>